<keyword id="KW-1003">Cell membrane</keyword>
<keyword id="KW-0333">Golgi apparatus</keyword>
<keyword id="KW-0342">GTP-binding</keyword>
<keyword id="KW-0449">Lipoprotein</keyword>
<keyword id="KW-0472">Membrane</keyword>
<keyword id="KW-0547">Nucleotide-binding</keyword>
<keyword id="KW-0636">Prenylation</keyword>
<keyword id="KW-0653">Protein transport</keyword>
<keyword id="KW-1185">Reference proteome</keyword>
<keyword id="KW-0813">Transport</keyword>
<reference key="1">
    <citation type="journal article" date="1991" name="Gene">
        <title>Isolation and analysis of cDNAs encoding small GTP-binding proteins of Arabidopsis thaliana.</title>
        <authorList>
            <person name="Anai T."/>
            <person name="Hasegawa K."/>
            <person name="Watanabe Y."/>
            <person name="Uchimiya H."/>
            <person name="Ishizaki R."/>
            <person name="Matsui M."/>
        </authorList>
    </citation>
    <scope>NUCLEOTIDE SEQUENCE [MRNA]</scope>
    <source>
        <strain>cv. Columbia</strain>
        <strain>cv. En-1</strain>
        <strain>cv. Est</strain>
        <strain>cv. Landsberg erecta</strain>
        <strain>cv. Lapalmam</strain>
        <tissue>Leaf</tissue>
    </source>
</reference>
<reference key="2">
    <citation type="journal article" date="2000" name="Nature">
        <title>Sequence and analysis of chromosome 3 of the plant Arabidopsis thaliana.</title>
        <authorList>
            <person name="Salanoubat M."/>
            <person name="Lemcke K."/>
            <person name="Rieger M."/>
            <person name="Ansorge W."/>
            <person name="Unseld M."/>
            <person name="Fartmann B."/>
            <person name="Valle G."/>
            <person name="Bloecker H."/>
            <person name="Perez-Alonso M."/>
            <person name="Obermaier B."/>
            <person name="Delseny M."/>
            <person name="Boutry M."/>
            <person name="Grivell L.A."/>
            <person name="Mache R."/>
            <person name="Puigdomenech P."/>
            <person name="De Simone V."/>
            <person name="Choisne N."/>
            <person name="Artiguenave F."/>
            <person name="Robert C."/>
            <person name="Brottier P."/>
            <person name="Wincker P."/>
            <person name="Cattolico L."/>
            <person name="Weissenbach J."/>
            <person name="Saurin W."/>
            <person name="Quetier F."/>
            <person name="Schaefer M."/>
            <person name="Mueller-Auer S."/>
            <person name="Gabel C."/>
            <person name="Fuchs M."/>
            <person name="Benes V."/>
            <person name="Wurmbach E."/>
            <person name="Drzonek H."/>
            <person name="Erfle H."/>
            <person name="Jordan N."/>
            <person name="Bangert S."/>
            <person name="Wiedelmann R."/>
            <person name="Kranz H."/>
            <person name="Voss H."/>
            <person name="Holland R."/>
            <person name="Brandt P."/>
            <person name="Nyakatura G."/>
            <person name="Vezzi A."/>
            <person name="D'Angelo M."/>
            <person name="Pallavicini A."/>
            <person name="Toppo S."/>
            <person name="Simionati B."/>
            <person name="Conrad A."/>
            <person name="Hornischer K."/>
            <person name="Kauer G."/>
            <person name="Loehnert T.-H."/>
            <person name="Nordsiek G."/>
            <person name="Reichelt J."/>
            <person name="Scharfe M."/>
            <person name="Schoen O."/>
            <person name="Bargues M."/>
            <person name="Terol J."/>
            <person name="Climent J."/>
            <person name="Navarro P."/>
            <person name="Collado C."/>
            <person name="Perez-Perez A."/>
            <person name="Ottenwaelder B."/>
            <person name="Duchemin D."/>
            <person name="Cooke R."/>
            <person name="Laudie M."/>
            <person name="Berger-Llauro C."/>
            <person name="Purnelle B."/>
            <person name="Masuy D."/>
            <person name="de Haan M."/>
            <person name="Maarse A.C."/>
            <person name="Alcaraz J.-P."/>
            <person name="Cottet A."/>
            <person name="Casacuberta E."/>
            <person name="Monfort A."/>
            <person name="Argiriou A."/>
            <person name="Flores M."/>
            <person name="Liguori R."/>
            <person name="Vitale D."/>
            <person name="Mannhaupt G."/>
            <person name="Haase D."/>
            <person name="Schoof H."/>
            <person name="Rudd S."/>
            <person name="Zaccaria P."/>
            <person name="Mewes H.-W."/>
            <person name="Mayer K.F.X."/>
            <person name="Kaul S."/>
            <person name="Town C.D."/>
            <person name="Koo H.L."/>
            <person name="Tallon L.J."/>
            <person name="Jenkins J."/>
            <person name="Rooney T."/>
            <person name="Rizzo M."/>
            <person name="Walts A."/>
            <person name="Utterback T."/>
            <person name="Fujii C.Y."/>
            <person name="Shea T.P."/>
            <person name="Creasy T.H."/>
            <person name="Haas B."/>
            <person name="Maiti R."/>
            <person name="Wu D."/>
            <person name="Peterson J."/>
            <person name="Van Aken S."/>
            <person name="Pai G."/>
            <person name="Militscher J."/>
            <person name="Sellers P."/>
            <person name="Gill J.E."/>
            <person name="Feldblyum T.V."/>
            <person name="Preuss D."/>
            <person name="Lin X."/>
            <person name="Nierman W.C."/>
            <person name="Salzberg S.L."/>
            <person name="White O."/>
            <person name="Venter J.C."/>
            <person name="Fraser C.M."/>
            <person name="Kaneko T."/>
            <person name="Nakamura Y."/>
            <person name="Sato S."/>
            <person name="Kato T."/>
            <person name="Asamizu E."/>
            <person name="Sasamoto S."/>
            <person name="Kimura T."/>
            <person name="Idesawa K."/>
            <person name="Kawashima K."/>
            <person name="Kishida Y."/>
            <person name="Kiyokawa C."/>
            <person name="Kohara M."/>
            <person name="Matsumoto M."/>
            <person name="Matsuno A."/>
            <person name="Muraki A."/>
            <person name="Nakayama S."/>
            <person name="Nakazaki N."/>
            <person name="Shinpo S."/>
            <person name="Takeuchi C."/>
            <person name="Wada T."/>
            <person name="Watanabe A."/>
            <person name="Yamada M."/>
            <person name="Yasuda M."/>
            <person name="Tabata S."/>
        </authorList>
    </citation>
    <scope>NUCLEOTIDE SEQUENCE [LARGE SCALE GENOMIC DNA]</scope>
    <source>
        <strain>cv. Columbia</strain>
    </source>
</reference>
<reference key="3">
    <citation type="journal article" date="2017" name="Plant J.">
        <title>Araport11: a complete reannotation of the Arabidopsis thaliana reference genome.</title>
        <authorList>
            <person name="Cheng C.Y."/>
            <person name="Krishnakumar V."/>
            <person name="Chan A.P."/>
            <person name="Thibaud-Nissen F."/>
            <person name="Schobel S."/>
            <person name="Town C.D."/>
        </authorList>
    </citation>
    <scope>GENOME REANNOTATION</scope>
    <source>
        <strain>cv. Columbia</strain>
    </source>
</reference>
<reference key="4">
    <citation type="journal article" date="2003" name="Science">
        <title>Empirical analysis of transcriptional activity in the Arabidopsis genome.</title>
        <authorList>
            <person name="Yamada K."/>
            <person name="Lim J."/>
            <person name="Dale J.M."/>
            <person name="Chen H."/>
            <person name="Shinn P."/>
            <person name="Palm C.J."/>
            <person name="Southwick A.M."/>
            <person name="Wu H.C."/>
            <person name="Kim C.J."/>
            <person name="Nguyen M."/>
            <person name="Pham P.K."/>
            <person name="Cheuk R.F."/>
            <person name="Karlin-Newmann G."/>
            <person name="Liu S.X."/>
            <person name="Lam B."/>
            <person name="Sakano H."/>
            <person name="Wu T."/>
            <person name="Yu G."/>
            <person name="Miranda M."/>
            <person name="Quach H.L."/>
            <person name="Tripp M."/>
            <person name="Chang C.H."/>
            <person name="Lee J.M."/>
            <person name="Toriumi M.J."/>
            <person name="Chan M.M."/>
            <person name="Tang C.C."/>
            <person name="Onodera C.S."/>
            <person name="Deng J.M."/>
            <person name="Akiyama K."/>
            <person name="Ansari Y."/>
            <person name="Arakawa T."/>
            <person name="Banh J."/>
            <person name="Banno F."/>
            <person name="Bowser L."/>
            <person name="Brooks S.Y."/>
            <person name="Carninci P."/>
            <person name="Chao Q."/>
            <person name="Choy N."/>
            <person name="Enju A."/>
            <person name="Goldsmith A.D."/>
            <person name="Gurjal M."/>
            <person name="Hansen N.F."/>
            <person name="Hayashizaki Y."/>
            <person name="Johnson-Hopson C."/>
            <person name="Hsuan V.W."/>
            <person name="Iida K."/>
            <person name="Karnes M."/>
            <person name="Khan S."/>
            <person name="Koesema E."/>
            <person name="Ishida J."/>
            <person name="Jiang P.X."/>
            <person name="Jones T."/>
            <person name="Kawai J."/>
            <person name="Kamiya A."/>
            <person name="Meyers C."/>
            <person name="Nakajima M."/>
            <person name="Narusaka M."/>
            <person name="Seki M."/>
            <person name="Sakurai T."/>
            <person name="Satou M."/>
            <person name="Tamse R."/>
            <person name="Vaysberg M."/>
            <person name="Wallender E.K."/>
            <person name="Wong C."/>
            <person name="Yamamura Y."/>
            <person name="Yuan S."/>
            <person name="Shinozaki K."/>
            <person name="Davis R.W."/>
            <person name="Theologis A."/>
            <person name="Ecker J.R."/>
        </authorList>
    </citation>
    <scope>NUCLEOTIDE SEQUENCE [LARGE SCALE MRNA]</scope>
    <source>
        <strain>cv. Columbia</strain>
    </source>
</reference>
<reference key="5">
    <citation type="journal article" date="2003" name="Plant Physiol.">
        <title>Analysis of the small GTPase gene superfamily of Arabidopsis.</title>
        <authorList>
            <person name="Vernoud V."/>
            <person name="Horton A.C."/>
            <person name="Yang Z."/>
            <person name="Nielsen E."/>
        </authorList>
    </citation>
    <scope>GENE FAMILY</scope>
    <scope>NOMENCLATURE</scope>
</reference>
<reference key="6">
    <citation type="journal article" date="2003" name="Plant Physiol.">
        <title>Ethylene regulates monomeric GTP-binding protein gene expression and activity in Arabidopsis.</title>
        <authorList>
            <person name="Moshkov I.E."/>
            <person name="Mur L.A."/>
            <person name="Novikova G.V."/>
            <person name="Smith A.R."/>
            <person name="Hall M.A."/>
        </authorList>
    </citation>
    <scope>INDUCTION BY ETHYLENE</scope>
</reference>
<reference key="7">
    <citation type="journal article" date="2004" name="Mol. Cell. Proteomics">
        <title>Identification of new intrinsic proteins in Arabidopsis plasma membrane proteome.</title>
        <authorList>
            <person name="Marmagne A."/>
            <person name="Rouet M.-A."/>
            <person name="Ferro M."/>
            <person name="Rolland N."/>
            <person name="Alcon C."/>
            <person name="Joyard J."/>
            <person name="Garin J."/>
            <person name="Barbier-Brygoo H."/>
            <person name="Ephritikhine G."/>
        </authorList>
    </citation>
    <scope>IDENTIFICATION BY MASS SPECTROMETRY</scope>
    <scope>SUBCELLULAR LOCATION [LARGE SCALE ANALYSIS]</scope>
</reference>
<reference key="8">
    <citation type="journal article" date="2009" name="J. Cell Sci.">
        <title>Arabidopsis Rab-E GTPases exhibit a novel interaction with a plasma-membrane phosphatidylinositol-4-phosphate 5-kinase.</title>
        <authorList>
            <person name="Camacho L."/>
            <person name="Smertenko A.P."/>
            <person name="Perez-Gomez J."/>
            <person name="Hussey P.J."/>
            <person name="Moore I."/>
        </authorList>
    </citation>
    <scope>INTERACTION WITH PI5K2</scope>
</reference>
<name>RAE1C_ARATH</name>
<dbReference type="EMBL" id="D01025">
    <property type="protein sequence ID" value="BAA00830.1"/>
    <property type="molecule type" value="mRNA"/>
</dbReference>
<dbReference type="EMBL" id="AL355775">
    <property type="protein sequence ID" value="CAB90933.1"/>
    <property type="molecule type" value="Genomic_DNA"/>
</dbReference>
<dbReference type="EMBL" id="CP002686">
    <property type="protein sequence ID" value="AEE78106.1"/>
    <property type="molecule type" value="Genomic_DNA"/>
</dbReference>
<dbReference type="EMBL" id="CP002686">
    <property type="protein sequence ID" value="AEE78107.1"/>
    <property type="molecule type" value="Genomic_DNA"/>
</dbReference>
<dbReference type="EMBL" id="CP002686">
    <property type="protein sequence ID" value="AEE78108.1"/>
    <property type="molecule type" value="Genomic_DNA"/>
</dbReference>
<dbReference type="EMBL" id="AY035132">
    <property type="protein sequence ID" value="AAK59637.1"/>
    <property type="molecule type" value="mRNA"/>
</dbReference>
<dbReference type="EMBL" id="AY042795">
    <property type="protein sequence ID" value="AAK68735.1"/>
    <property type="molecule type" value="mRNA"/>
</dbReference>
<dbReference type="EMBL" id="BT001952">
    <property type="protein sequence ID" value="AAN71951.1"/>
    <property type="molecule type" value="mRNA"/>
</dbReference>
<dbReference type="EMBL" id="BT002186">
    <property type="protein sequence ID" value="AAN72197.1"/>
    <property type="molecule type" value="mRNA"/>
</dbReference>
<dbReference type="PIR" id="JS0640">
    <property type="entry name" value="JS0640"/>
</dbReference>
<dbReference type="RefSeq" id="NP_001078248.1">
    <property type="nucleotide sequence ID" value="NM_001084779.1"/>
</dbReference>
<dbReference type="RefSeq" id="NP_001118780.1">
    <property type="nucleotide sequence ID" value="NM_001125308.1"/>
</dbReference>
<dbReference type="RefSeq" id="NP_190192.1">
    <property type="nucleotide sequence ID" value="NM_114475.4"/>
</dbReference>
<dbReference type="SMR" id="P28186"/>
<dbReference type="BioGRID" id="9069">
    <property type="interactions" value="11"/>
</dbReference>
<dbReference type="FunCoup" id="P28186">
    <property type="interactions" value="4288"/>
</dbReference>
<dbReference type="IntAct" id="P28186">
    <property type="interactions" value="10"/>
</dbReference>
<dbReference type="STRING" id="3702.P28186"/>
<dbReference type="iPTMnet" id="P28186"/>
<dbReference type="PaxDb" id="3702-AT3G46060.2"/>
<dbReference type="ProteomicsDB" id="236626"/>
<dbReference type="EnsemblPlants" id="AT3G46060.1">
    <property type="protein sequence ID" value="AT3G46060.1"/>
    <property type="gene ID" value="AT3G46060"/>
</dbReference>
<dbReference type="EnsemblPlants" id="AT3G46060.2">
    <property type="protein sequence ID" value="AT3G46060.2"/>
    <property type="gene ID" value="AT3G46060"/>
</dbReference>
<dbReference type="EnsemblPlants" id="AT3G46060.3">
    <property type="protein sequence ID" value="AT3G46060.3"/>
    <property type="gene ID" value="AT3G46060"/>
</dbReference>
<dbReference type="GeneID" id="823749"/>
<dbReference type="Gramene" id="AT3G46060.1">
    <property type="protein sequence ID" value="AT3G46060.1"/>
    <property type="gene ID" value="AT3G46060"/>
</dbReference>
<dbReference type="Gramene" id="AT3G46060.2">
    <property type="protein sequence ID" value="AT3G46060.2"/>
    <property type="gene ID" value="AT3G46060"/>
</dbReference>
<dbReference type="Gramene" id="AT3G46060.3">
    <property type="protein sequence ID" value="AT3G46060.3"/>
    <property type="gene ID" value="AT3G46060"/>
</dbReference>
<dbReference type="KEGG" id="ath:AT3G46060"/>
<dbReference type="Araport" id="AT3G46060"/>
<dbReference type="TAIR" id="AT3G46060">
    <property type="gene designation" value="RABE1C"/>
</dbReference>
<dbReference type="eggNOG" id="KOG0078">
    <property type="taxonomic scope" value="Eukaryota"/>
</dbReference>
<dbReference type="HOGENOM" id="CLU_041217_10_1_1"/>
<dbReference type="InParanoid" id="P28186"/>
<dbReference type="OMA" id="FDWLIKI"/>
<dbReference type="OrthoDB" id="1091537at2759"/>
<dbReference type="PhylomeDB" id="P28186"/>
<dbReference type="PRO" id="PR:P28186"/>
<dbReference type="Proteomes" id="UP000006548">
    <property type="component" value="Chromosome 3"/>
</dbReference>
<dbReference type="ExpressionAtlas" id="P28186">
    <property type="expression patterns" value="baseline and differential"/>
</dbReference>
<dbReference type="GO" id="GO:0005829">
    <property type="term" value="C:cytosol"/>
    <property type="evidence" value="ECO:0007005"/>
    <property type="project" value="TAIR"/>
</dbReference>
<dbReference type="GO" id="GO:0000139">
    <property type="term" value="C:Golgi membrane"/>
    <property type="evidence" value="ECO:0007669"/>
    <property type="project" value="UniProtKB-SubCell"/>
</dbReference>
<dbReference type="GO" id="GO:0000325">
    <property type="term" value="C:plant-type vacuole"/>
    <property type="evidence" value="ECO:0007005"/>
    <property type="project" value="TAIR"/>
</dbReference>
<dbReference type="GO" id="GO:0005886">
    <property type="term" value="C:plasma membrane"/>
    <property type="evidence" value="ECO:0007005"/>
    <property type="project" value="TAIR"/>
</dbReference>
<dbReference type="GO" id="GO:0005525">
    <property type="term" value="F:GTP binding"/>
    <property type="evidence" value="ECO:0000250"/>
    <property type="project" value="TAIR"/>
</dbReference>
<dbReference type="GO" id="GO:0003924">
    <property type="term" value="F:GTPase activity"/>
    <property type="evidence" value="ECO:0007669"/>
    <property type="project" value="InterPro"/>
</dbReference>
<dbReference type="GO" id="GO:1901527">
    <property type="term" value="P:abscisic acid-activated signaling pathway involved in stomatal movement"/>
    <property type="evidence" value="ECO:0000315"/>
    <property type="project" value="TAIR"/>
</dbReference>
<dbReference type="GO" id="GO:0009873">
    <property type="term" value="P:ethylene-activated signaling pathway"/>
    <property type="evidence" value="ECO:0000270"/>
    <property type="project" value="TAIR"/>
</dbReference>
<dbReference type="GO" id="GO:0015031">
    <property type="term" value="P:protein transport"/>
    <property type="evidence" value="ECO:0007669"/>
    <property type="project" value="UniProtKB-KW"/>
</dbReference>
<dbReference type="CDD" id="cd01867">
    <property type="entry name" value="Rab8_Rab10_Rab13_like"/>
    <property type="match status" value="1"/>
</dbReference>
<dbReference type="FunFam" id="3.40.50.300:FF:000308">
    <property type="entry name" value="ras-related protein RABE1c-like"/>
    <property type="match status" value="1"/>
</dbReference>
<dbReference type="Gene3D" id="3.40.50.300">
    <property type="entry name" value="P-loop containing nucleotide triphosphate hydrolases"/>
    <property type="match status" value="1"/>
</dbReference>
<dbReference type="InterPro" id="IPR027417">
    <property type="entry name" value="P-loop_NTPase"/>
</dbReference>
<dbReference type="InterPro" id="IPR005225">
    <property type="entry name" value="Small_GTP-bd"/>
</dbReference>
<dbReference type="InterPro" id="IPR001806">
    <property type="entry name" value="Small_GTPase"/>
</dbReference>
<dbReference type="InterPro" id="IPR050305">
    <property type="entry name" value="Small_GTPase_Rab"/>
</dbReference>
<dbReference type="NCBIfam" id="TIGR00231">
    <property type="entry name" value="small_GTP"/>
    <property type="match status" value="1"/>
</dbReference>
<dbReference type="PANTHER" id="PTHR47980">
    <property type="entry name" value="LD44762P"/>
    <property type="match status" value="1"/>
</dbReference>
<dbReference type="Pfam" id="PF00071">
    <property type="entry name" value="Ras"/>
    <property type="match status" value="1"/>
</dbReference>
<dbReference type="PRINTS" id="PR00449">
    <property type="entry name" value="RASTRNSFRMNG"/>
</dbReference>
<dbReference type="SMART" id="SM00177">
    <property type="entry name" value="ARF"/>
    <property type="match status" value="1"/>
</dbReference>
<dbReference type="SMART" id="SM00175">
    <property type="entry name" value="RAB"/>
    <property type="match status" value="1"/>
</dbReference>
<dbReference type="SMART" id="SM00176">
    <property type="entry name" value="RAN"/>
    <property type="match status" value="1"/>
</dbReference>
<dbReference type="SMART" id="SM00173">
    <property type="entry name" value="RAS"/>
    <property type="match status" value="1"/>
</dbReference>
<dbReference type="SMART" id="SM00174">
    <property type="entry name" value="RHO"/>
    <property type="match status" value="1"/>
</dbReference>
<dbReference type="SUPFAM" id="SSF52540">
    <property type="entry name" value="P-loop containing nucleoside triphosphate hydrolases"/>
    <property type="match status" value="1"/>
</dbReference>
<dbReference type="PROSITE" id="PS51419">
    <property type="entry name" value="RAB"/>
    <property type="match status" value="1"/>
</dbReference>
<sequence length="216" mass="23835">MAAPPARARADYDYLIKLLLIGDSGVGKSCLLLRFSDGSFTTSFITTIGIDFKIRTIELDGKRIKLQIWDTAGQERFRTITTAYYRGAMGILLVYDVTDESSFNNIRNWIRNIEQHASDNVNKILVGNKADMDESKRAVPTAKGQALADEYGIKFFETSAKTNLNVEEVFFSIGRDIKQRLSDTDSRAEPATIKISQTDQAAGAGQATQKSACCGT</sequence>
<accession>P28186</accession>
<evidence type="ECO:0000250" key="1"/>
<evidence type="ECO:0000269" key="2">
    <source>
    </source>
</evidence>
<evidence type="ECO:0000269" key="3">
    <source>
    </source>
</evidence>
<evidence type="ECO:0000269" key="4">
    <source>
    </source>
</evidence>
<evidence type="ECO:0000305" key="5"/>
<feature type="chain" id="PRO_0000121289" description="Ras-related protein RABE1c">
    <location>
        <begin position="1"/>
        <end position="216"/>
    </location>
</feature>
<feature type="short sequence motif" description="Effector region" evidence="1">
    <location>
        <begin position="44"/>
        <end position="52"/>
    </location>
</feature>
<feature type="binding site" evidence="1">
    <location>
        <begin position="22"/>
        <end position="29"/>
    </location>
    <ligand>
        <name>GTP</name>
        <dbReference type="ChEBI" id="CHEBI:37565"/>
    </ligand>
</feature>
<feature type="binding site" evidence="1">
    <location>
        <begin position="70"/>
        <end position="74"/>
    </location>
    <ligand>
        <name>GTP</name>
        <dbReference type="ChEBI" id="CHEBI:37565"/>
    </ligand>
</feature>
<feature type="binding site" evidence="1">
    <location>
        <begin position="128"/>
        <end position="131"/>
    </location>
    <ligand>
        <name>GTP</name>
        <dbReference type="ChEBI" id="CHEBI:37565"/>
    </ligand>
</feature>
<feature type="binding site" evidence="1">
    <location>
        <begin position="159"/>
        <end position="160"/>
    </location>
    <ligand>
        <name>GTP</name>
        <dbReference type="ChEBI" id="CHEBI:37565"/>
    </ligand>
</feature>
<feature type="lipid moiety-binding region" description="S-geranylgeranyl cysteine" evidence="1">
    <location>
        <position position="213"/>
    </location>
</feature>
<feature type="lipid moiety-binding region" description="S-geranylgeranyl cysteine" evidence="1">
    <location>
        <position position="214"/>
    </location>
</feature>
<gene>
    <name type="primary">RABE1C</name>
    <name type="synonym">ARA-3</name>
    <name type="synonym">RAB8A</name>
    <name type="ordered locus">At3g46060</name>
    <name type="ORF">F12M12.30</name>
</gene>
<organism>
    <name type="scientific">Arabidopsis thaliana</name>
    <name type="common">Mouse-ear cress</name>
    <dbReference type="NCBI Taxonomy" id="3702"/>
    <lineage>
        <taxon>Eukaryota</taxon>
        <taxon>Viridiplantae</taxon>
        <taxon>Streptophyta</taxon>
        <taxon>Embryophyta</taxon>
        <taxon>Tracheophyta</taxon>
        <taxon>Spermatophyta</taxon>
        <taxon>Magnoliopsida</taxon>
        <taxon>eudicotyledons</taxon>
        <taxon>Gunneridae</taxon>
        <taxon>Pentapetalae</taxon>
        <taxon>rosids</taxon>
        <taxon>malvids</taxon>
        <taxon>Brassicales</taxon>
        <taxon>Brassicaceae</taxon>
        <taxon>Camelineae</taxon>
        <taxon>Arabidopsis</taxon>
    </lineage>
</organism>
<protein>
    <recommendedName>
        <fullName>Ras-related protein RABE1c</fullName>
        <shortName>AtRABE1c</shortName>
    </recommendedName>
    <alternativeName>
        <fullName>Ras-related protein Ara-3</fullName>
    </alternativeName>
    <alternativeName>
        <fullName>Ras-related protein Rab8A</fullName>
        <shortName>AtRab8A</shortName>
    </alternativeName>
</protein>
<proteinExistence type="evidence at protein level"/>
<comment type="function">
    <text evidence="1">Involved in membrane trafficking from the Golgi to the plasma membrane.</text>
</comment>
<comment type="subunit">
    <text evidence="4">Interacts with PI5K2.</text>
</comment>
<comment type="interaction">
    <interactant intactId="EBI-4433523">
        <id>P28186</id>
    </interactant>
    <interactant intactId="EBI-4425250">
        <id>Q8LA96</id>
        <label>BPL1</label>
    </interactant>
    <organismsDiffer>false</organismsDiffer>
    <experiments>4</experiments>
</comment>
<comment type="subcellular location">
    <subcellularLocation>
        <location>Golgi apparatus membrane</location>
    </subcellularLocation>
    <subcellularLocation>
        <location evidence="3">Cell membrane</location>
        <topology evidence="5">Lipid-anchor</topology>
    </subcellularLocation>
</comment>
<comment type="induction">
    <text evidence="2">By ethylene.</text>
</comment>
<comment type="similarity">
    <text evidence="5">Belongs to the small GTPase superfamily. Rab family.</text>
</comment>